<feature type="chain" id="PRO_1000084953" description="DNA polymerase IV">
    <location>
        <begin position="1"/>
        <end position="353"/>
    </location>
</feature>
<feature type="domain" description="UmuC" evidence="1">
    <location>
        <begin position="14"/>
        <end position="198"/>
    </location>
</feature>
<feature type="active site" evidence="1">
    <location>
        <position position="117"/>
    </location>
</feature>
<feature type="binding site" evidence="1">
    <location>
        <position position="18"/>
    </location>
    <ligand>
        <name>Mg(2+)</name>
        <dbReference type="ChEBI" id="CHEBI:18420"/>
    </ligand>
</feature>
<feature type="binding site" evidence="1">
    <location>
        <position position="116"/>
    </location>
    <ligand>
        <name>Mg(2+)</name>
        <dbReference type="ChEBI" id="CHEBI:18420"/>
    </ligand>
</feature>
<feature type="site" description="Substrate discrimination" evidence="1">
    <location>
        <position position="23"/>
    </location>
</feature>
<keyword id="KW-0963">Cytoplasm</keyword>
<keyword id="KW-0227">DNA damage</keyword>
<keyword id="KW-0234">DNA repair</keyword>
<keyword id="KW-0235">DNA replication</keyword>
<keyword id="KW-0238">DNA-binding</keyword>
<keyword id="KW-0239">DNA-directed DNA polymerase</keyword>
<keyword id="KW-0460">Magnesium</keyword>
<keyword id="KW-0479">Metal-binding</keyword>
<keyword id="KW-0515">Mutator protein</keyword>
<keyword id="KW-0548">Nucleotidyltransferase</keyword>
<keyword id="KW-1185">Reference proteome</keyword>
<keyword id="KW-0808">Transferase</keyword>
<accession>Q04M21</accession>
<evidence type="ECO:0000255" key="1">
    <source>
        <dbReference type="HAMAP-Rule" id="MF_01113"/>
    </source>
</evidence>
<sequence>MLIFPLLNDLSRKIIHIDMDAFFAAVEIKDNPKLRGKPVIIGSDPRQTGGRGVVSTCSYEARAFGVHSAMSSKEAYERCPQAVFISGNYEKYKAVGLQIRAIFKRYTDLIEPMSIDEAYLDVTENKLGIKSAVKIARLIQKDIWQELHLTASAGISYNKFLAKMASDYQKPHGLTVILPEQAEDFLKQMDISKFHGVGKKTVERLHQMGVFTGADLLEVPEVTLIDRFGRLGYDLYRKARGIHNSPVKSNRIRKSIGKEKTYGKILRAEEDIKKELTLLSEKVALNLHQQEKAGKIVILKIRYEDFSTLTKRKSIAQKTQDASQISQIALQLYEELSEKERGVRLLGITMTGF</sequence>
<organism>
    <name type="scientific">Streptococcus pneumoniae serotype 2 (strain D39 / NCTC 7466)</name>
    <dbReference type="NCBI Taxonomy" id="373153"/>
    <lineage>
        <taxon>Bacteria</taxon>
        <taxon>Bacillati</taxon>
        <taxon>Bacillota</taxon>
        <taxon>Bacilli</taxon>
        <taxon>Lactobacillales</taxon>
        <taxon>Streptococcaceae</taxon>
        <taxon>Streptococcus</taxon>
    </lineage>
</organism>
<dbReference type="EC" id="2.7.7.7" evidence="1"/>
<dbReference type="EMBL" id="CP000410">
    <property type="protein sequence ID" value="ABJ54388.1"/>
    <property type="molecule type" value="Genomic_DNA"/>
</dbReference>
<dbReference type="RefSeq" id="WP_000904564.1">
    <property type="nucleotide sequence ID" value="NZ_JAMLJR010000009.1"/>
</dbReference>
<dbReference type="SMR" id="Q04M21"/>
<dbReference type="PaxDb" id="373153-SPD_0419"/>
<dbReference type="KEGG" id="spd:SPD_0419"/>
<dbReference type="eggNOG" id="COG0389">
    <property type="taxonomic scope" value="Bacteria"/>
</dbReference>
<dbReference type="HOGENOM" id="CLU_012348_1_2_9"/>
<dbReference type="BioCyc" id="SPNE373153:G1G6V-456-MONOMER"/>
<dbReference type="Proteomes" id="UP000001452">
    <property type="component" value="Chromosome"/>
</dbReference>
<dbReference type="GO" id="GO:0005829">
    <property type="term" value="C:cytosol"/>
    <property type="evidence" value="ECO:0007669"/>
    <property type="project" value="TreeGrafter"/>
</dbReference>
<dbReference type="GO" id="GO:0003684">
    <property type="term" value="F:damaged DNA binding"/>
    <property type="evidence" value="ECO:0007669"/>
    <property type="project" value="InterPro"/>
</dbReference>
<dbReference type="GO" id="GO:0003887">
    <property type="term" value="F:DNA-directed DNA polymerase activity"/>
    <property type="evidence" value="ECO:0007669"/>
    <property type="project" value="UniProtKB-UniRule"/>
</dbReference>
<dbReference type="GO" id="GO:0000287">
    <property type="term" value="F:magnesium ion binding"/>
    <property type="evidence" value="ECO:0007669"/>
    <property type="project" value="UniProtKB-UniRule"/>
</dbReference>
<dbReference type="GO" id="GO:0006261">
    <property type="term" value="P:DNA-templated DNA replication"/>
    <property type="evidence" value="ECO:0007669"/>
    <property type="project" value="UniProtKB-UniRule"/>
</dbReference>
<dbReference type="GO" id="GO:0042276">
    <property type="term" value="P:error-prone translesion synthesis"/>
    <property type="evidence" value="ECO:0007669"/>
    <property type="project" value="TreeGrafter"/>
</dbReference>
<dbReference type="GO" id="GO:0009432">
    <property type="term" value="P:SOS response"/>
    <property type="evidence" value="ECO:0007669"/>
    <property type="project" value="TreeGrafter"/>
</dbReference>
<dbReference type="CDD" id="cd03586">
    <property type="entry name" value="PolY_Pol_IV_kappa"/>
    <property type="match status" value="1"/>
</dbReference>
<dbReference type="FunFam" id="3.40.1170.60:FF:000001">
    <property type="entry name" value="DNA polymerase IV"/>
    <property type="match status" value="1"/>
</dbReference>
<dbReference type="Gene3D" id="3.30.70.270">
    <property type="match status" value="1"/>
</dbReference>
<dbReference type="Gene3D" id="3.40.1170.60">
    <property type="match status" value="1"/>
</dbReference>
<dbReference type="Gene3D" id="1.10.150.20">
    <property type="entry name" value="5' to 3' exonuclease, C-terminal subdomain"/>
    <property type="match status" value="1"/>
</dbReference>
<dbReference type="Gene3D" id="3.30.1490.100">
    <property type="entry name" value="DNA polymerase, Y-family, little finger domain"/>
    <property type="match status" value="1"/>
</dbReference>
<dbReference type="HAMAP" id="MF_01113">
    <property type="entry name" value="DNApol_IV"/>
    <property type="match status" value="1"/>
</dbReference>
<dbReference type="InterPro" id="IPR043502">
    <property type="entry name" value="DNA/RNA_pol_sf"/>
</dbReference>
<dbReference type="InterPro" id="IPR036775">
    <property type="entry name" value="DNA_pol_Y-fam_lit_finger_sf"/>
</dbReference>
<dbReference type="InterPro" id="IPR017961">
    <property type="entry name" value="DNA_pol_Y-fam_little_finger"/>
</dbReference>
<dbReference type="InterPro" id="IPR050116">
    <property type="entry name" value="DNA_polymerase-Y"/>
</dbReference>
<dbReference type="InterPro" id="IPR022880">
    <property type="entry name" value="DNApol_IV"/>
</dbReference>
<dbReference type="InterPro" id="IPR024728">
    <property type="entry name" value="PolY_HhH_motif"/>
</dbReference>
<dbReference type="InterPro" id="IPR043128">
    <property type="entry name" value="Rev_trsase/Diguanyl_cyclase"/>
</dbReference>
<dbReference type="InterPro" id="IPR001126">
    <property type="entry name" value="UmuC"/>
</dbReference>
<dbReference type="NCBIfam" id="NF002677">
    <property type="entry name" value="PRK02406.1"/>
    <property type="match status" value="1"/>
</dbReference>
<dbReference type="PANTHER" id="PTHR11076:SF33">
    <property type="entry name" value="DNA POLYMERASE KAPPA"/>
    <property type="match status" value="1"/>
</dbReference>
<dbReference type="PANTHER" id="PTHR11076">
    <property type="entry name" value="DNA REPAIR POLYMERASE UMUC / TRANSFERASE FAMILY MEMBER"/>
    <property type="match status" value="1"/>
</dbReference>
<dbReference type="Pfam" id="PF00817">
    <property type="entry name" value="IMS"/>
    <property type="match status" value="1"/>
</dbReference>
<dbReference type="Pfam" id="PF11799">
    <property type="entry name" value="IMS_C"/>
    <property type="match status" value="1"/>
</dbReference>
<dbReference type="Pfam" id="PF11798">
    <property type="entry name" value="IMS_HHH"/>
    <property type="match status" value="1"/>
</dbReference>
<dbReference type="SUPFAM" id="SSF56672">
    <property type="entry name" value="DNA/RNA polymerases"/>
    <property type="match status" value="1"/>
</dbReference>
<dbReference type="SUPFAM" id="SSF100879">
    <property type="entry name" value="Lesion bypass DNA polymerase (Y-family), little finger domain"/>
    <property type="match status" value="1"/>
</dbReference>
<dbReference type="PROSITE" id="PS50173">
    <property type="entry name" value="UMUC"/>
    <property type="match status" value="1"/>
</dbReference>
<proteinExistence type="inferred from homology"/>
<reference key="1">
    <citation type="journal article" date="2007" name="J. Bacteriol.">
        <title>Genome sequence of Avery's virulent serotype 2 strain D39 of Streptococcus pneumoniae and comparison with that of unencapsulated laboratory strain R6.</title>
        <authorList>
            <person name="Lanie J.A."/>
            <person name="Ng W.-L."/>
            <person name="Kazmierczak K.M."/>
            <person name="Andrzejewski T.M."/>
            <person name="Davidsen T.M."/>
            <person name="Wayne K.J."/>
            <person name="Tettelin H."/>
            <person name="Glass J.I."/>
            <person name="Winkler M.E."/>
        </authorList>
    </citation>
    <scope>NUCLEOTIDE SEQUENCE [LARGE SCALE GENOMIC DNA]</scope>
    <source>
        <strain>D39 / NCTC 7466</strain>
    </source>
</reference>
<protein>
    <recommendedName>
        <fullName evidence="1">DNA polymerase IV</fullName>
        <shortName evidence="1">Pol IV</shortName>
        <ecNumber evidence="1">2.7.7.7</ecNumber>
    </recommendedName>
</protein>
<gene>
    <name evidence="1" type="primary">dinB</name>
    <name type="ordered locus">SPD_0419</name>
</gene>
<name>DPO4_STRP2</name>
<comment type="function">
    <text evidence="1">Poorly processive, error-prone DNA polymerase involved in untargeted mutagenesis. Copies undamaged DNA at stalled replication forks, which arise in vivo from mismatched or misaligned primer ends. These misaligned primers can be extended by PolIV. Exhibits no 3'-5' exonuclease (proofreading) activity. May be involved in translesional synthesis, in conjunction with the beta clamp from PolIII.</text>
</comment>
<comment type="catalytic activity">
    <reaction evidence="1">
        <text>DNA(n) + a 2'-deoxyribonucleoside 5'-triphosphate = DNA(n+1) + diphosphate</text>
        <dbReference type="Rhea" id="RHEA:22508"/>
        <dbReference type="Rhea" id="RHEA-COMP:17339"/>
        <dbReference type="Rhea" id="RHEA-COMP:17340"/>
        <dbReference type="ChEBI" id="CHEBI:33019"/>
        <dbReference type="ChEBI" id="CHEBI:61560"/>
        <dbReference type="ChEBI" id="CHEBI:173112"/>
        <dbReference type="EC" id="2.7.7.7"/>
    </reaction>
</comment>
<comment type="cofactor">
    <cofactor evidence="1">
        <name>Mg(2+)</name>
        <dbReference type="ChEBI" id="CHEBI:18420"/>
    </cofactor>
    <text evidence="1">Binds 2 magnesium ions per subunit.</text>
</comment>
<comment type="subunit">
    <text evidence="1">Monomer.</text>
</comment>
<comment type="subcellular location">
    <subcellularLocation>
        <location evidence="1">Cytoplasm</location>
    </subcellularLocation>
</comment>
<comment type="similarity">
    <text evidence="1">Belongs to the DNA polymerase type-Y family.</text>
</comment>